<feature type="chain" id="PRO_0000211139" description="Segregation and condensation protein B">
    <location>
        <begin position="1"/>
        <end position="207"/>
    </location>
</feature>
<reference key="1">
    <citation type="journal article" date="1995" name="Science">
        <title>The minimal gene complement of Mycoplasma genitalium.</title>
        <authorList>
            <person name="Fraser C.M."/>
            <person name="Gocayne J.D."/>
            <person name="White O."/>
            <person name="Adams M.D."/>
            <person name="Clayton R.A."/>
            <person name="Fleischmann R.D."/>
            <person name="Bult C.J."/>
            <person name="Kerlavage A.R."/>
            <person name="Sutton G.G."/>
            <person name="Kelley J.M."/>
            <person name="Fritchman J.L."/>
            <person name="Weidman J.F."/>
            <person name="Small K.V."/>
            <person name="Sandusky M."/>
            <person name="Fuhrmann J.L."/>
            <person name="Nguyen D.T."/>
            <person name="Utterback T.R."/>
            <person name="Saudek D.M."/>
            <person name="Phillips C.A."/>
            <person name="Merrick J.M."/>
            <person name="Tomb J.-F."/>
            <person name="Dougherty B.A."/>
            <person name="Bott K.F."/>
            <person name="Hu P.-C."/>
            <person name="Lucier T.S."/>
            <person name="Peterson S.N."/>
            <person name="Smith H.O."/>
            <person name="Hutchison C.A. III"/>
            <person name="Venter J.C."/>
        </authorList>
    </citation>
    <scope>NUCLEOTIDE SEQUENCE [LARGE SCALE GENOMIC DNA]</scope>
    <source>
        <strain>ATCC 33530 / DSM 19775 / NCTC 10195 / G37</strain>
    </source>
</reference>
<proteinExistence type="inferred from homology"/>
<evidence type="ECO:0000255" key="1">
    <source>
        <dbReference type="HAMAP-Rule" id="MF_01804"/>
    </source>
</evidence>
<comment type="function">
    <text evidence="1">Participates in chromosomal partition during cell division. May act via the formation of a condensin-like complex containing Smc and ScpA that pull DNA away from mid-cell into both cell halves.</text>
</comment>
<comment type="subunit">
    <text evidence="1">Homodimer. Homodimerization may be required to stabilize the binding of ScpA to the Smc head domains. Component of a cohesin-like complex composed of ScpA, ScpB and the Smc homodimer, in which ScpA and ScpB bind to the head domain of Smc. The presence of the three proteins is required for the association of the complex with DNA.</text>
</comment>
<comment type="subcellular location">
    <subcellularLocation>
        <location evidence="1">Cytoplasm</location>
    </subcellularLocation>
    <text evidence="1">Associated with two foci at the outer edges of the nucleoid region in young cells, and at four foci within both cell halves in older cells.</text>
</comment>
<comment type="similarity">
    <text evidence="1">Belongs to the ScpB family.</text>
</comment>
<protein>
    <recommendedName>
        <fullName evidence="1">Segregation and condensation protein B</fullName>
    </recommendedName>
</protein>
<accession>P47456</accession>
<keyword id="KW-0131">Cell cycle</keyword>
<keyword id="KW-0132">Cell division</keyword>
<keyword id="KW-0159">Chromosome partition</keyword>
<keyword id="KW-0963">Cytoplasm</keyword>
<keyword id="KW-1185">Reference proteome</keyword>
<sequence>MKTTINIATPTLKKPSKEANLVASIYGLLFVCGAKGITLRELIRIFKKAGIEKVKLALLALERKLADDEQSGVELKKFGNSFSLVTKPIIKDYLHLLLAHKVKNPLNSKAMEVLAIIAYNQPCTRPRINEIRGVDSFQIVDDLIAKELIVELGRTDKPGRPFIYEVSAKFYDLFGIDSLDQLPKIEHFDLDKFKQGSFFDSNRYGDE</sequence>
<dbReference type="EMBL" id="L43967">
    <property type="protein sequence ID" value="AAC71433.1"/>
    <property type="molecule type" value="Genomic_DNA"/>
</dbReference>
<dbReference type="PIR" id="F64223">
    <property type="entry name" value="F64223"/>
</dbReference>
<dbReference type="RefSeq" id="WP_009885754.1">
    <property type="nucleotide sequence ID" value="NC_000908.2"/>
</dbReference>
<dbReference type="SMR" id="P47456"/>
<dbReference type="FunCoup" id="P47456">
    <property type="interactions" value="113"/>
</dbReference>
<dbReference type="STRING" id="243273.MG_214"/>
<dbReference type="GeneID" id="88282349"/>
<dbReference type="KEGG" id="mge:MG_214"/>
<dbReference type="eggNOG" id="COG1386">
    <property type="taxonomic scope" value="Bacteria"/>
</dbReference>
<dbReference type="HOGENOM" id="CLU_045647_5_3_14"/>
<dbReference type="InParanoid" id="P47456"/>
<dbReference type="OrthoDB" id="9806226at2"/>
<dbReference type="BioCyc" id="MGEN243273:G1GJ2-250-MONOMER"/>
<dbReference type="Proteomes" id="UP000000807">
    <property type="component" value="Chromosome"/>
</dbReference>
<dbReference type="GO" id="GO:0005737">
    <property type="term" value="C:cytoplasm"/>
    <property type="evidence" value="ECO:0007669"/>
    <property type="project" value="UniProtKB-SubCell"/>
</dbReference>
<dbReference type="GO" id="GO:0051301">
    <property type="term" value="P:cell division"/>
    <property type="evidence" value="ECO:0007669"/>
    <property type="project" value="UniProtKB-KW"/>
</dbReference>
<dbReference type="GO" id="GO:0051304">
    <property type="term" value="P:chromosome separation"/>
    <property type="evidence" value="ECO:0007669"/>
    <property type="project" value="InterPro"/>
</dbReference>
<dbReference type="GO" id="GO:0006260">
    <property type="term" value="P:DNA replication"/>
    <property type="evidence" value="ECO:0007669"/>
    <property type="project" value="UniProtKB-UniRule"/>
</dbReference>
<dbReference type="Gene3D" id="1.10.10.10">
    <property type="entry name" value="Winged helix-like DNA-binding domain superfamily/Winged helix DNA-binding domain"/>
    <property type="match status" value="2"/>
</dbReference>
<dbReference type="HAMAP" id="MF_01804">
    <property type="entry name" value="ScpB"/>
    <property type="match status" value="1"/>
</dbReference>
<dbReference type="InterPro" id="IPR005234">
    <property type="entry name" value="ScpB_csome_segregation"/>
</dbReference>
<dbReference type="InterPro" id="IPR036388">
    <property type="entry name" value="WH-like_DNA-bd_sf"/>
</dbReference>
<dbReference type="InterPro" id="IPR036390">
    <property type="entry name" value="WH_DNA-bd_sf"/>
</dbReference>
<dbReference type="NCBIfam" id="TIGR00281">
    <property type="entry name" value="SMC-Scp complex subunit ScpB"/>
    <property type="match status" value="1"/>
</dbReference>
<dbReference type="PANTHER" id="PTHR34298">
    <property type="entry name" value="SEGREGATION AND CONDENSATION PROTEIN B"/>
    <property type="match status" value="1"/>
</dbReference>
<dbReference type="PANTHER" id="PTHR34298:SF2">
    <property type="entry name" value="SEGREGATION AND CONDENSATION PROTEIN B"/>
    <property type="match status" value="1"/>
</dbReference>
<dbReference type="Pfam" id="PF04079">
    <property type="entry name" value="SMC_ScpB"/>
    <property type="match status" value="1"/>
</dbReference>
<dbReference type="PIRSF" id="PIRSF019345">
    <property type="entry name" value="ScpB"/>
    <property type="match status" value="1"/>
</dbReference>
<dbReference type="SUPFAM" id="SSF46785">
    <property type="entry name" value="Winged helix' DNA-binding domain"/>
    <property type="match status" value="2"/>
</dbReference>
<organism>
    <name type="scientific">Mycoplasma genitalium (strain ATCC 33530 / DSM 19775 / NCTC 10195 / G37)</name>
    <name type="common">Mycoplasmoides genitalium</name>
    <dbReference type="NCBI Taxonomy" id="243273"/>
    <lineage>
        <taxon>Bacteria</taxon>
        <taxon>Bacillati</taxon>
        <taxon>Mycoplasmatota</taxon>
        <taxon>Mycoplasmoidales</taxon>
        <taxon>Mycoplasmoidaceae</taxon>
        <taxon>Mycoplasmoides</taxon>
    </lineage>
</organism>
<name>SCPB_MYCGE</name>
<gene>
    <name evidence="1" type="primary">scpB</name>
    <name type="ordered locus">MG214</name>
</gene>